<geneLocation type="chloroplast"/>
<gene>
    <name evidence="1" type="primary">psbT</name>
</gene>
<keyword id="KW-0150">Chloroplast</keyword>
<keyword id="KW-0472">Membrane</keyword>
<keyword id="KW-0602">Photosynthesis</keyword>
<keyword id="KW-0604">Photosystem II</keyword>
<keyword id="KW-0934">Plastid</keyword>
<keyword id="KW-0793">Thylakoid</keyword>
<keyword id="KW-0812">Transmembrane</keyword>
<keyword id="KW-1133">Transmembrane helix</keyword>
<feature type="chain" id="PRO_0000217920" description="Photosystem II reaction center protein T">
    <location>
        <begin position="1"/>
        <end position="35"/>
    </location>
</feature>
<feature type="transmembrane region" description="Helical" evidence="1">
    <location>
        <begin position="3"/>
        <end position="23"/>
    </location>
</feature>
<organism>
    <name type="scientific">Cornus mas</name>
    <name type="common">Cornelian cherry dogwood</name>
    <dbReference type="NCBI Taxonomy" id="4285"/>
    <lineage>
        <taxon>Eukaryota</taxon>
        <taxon>Viridiplantae</taxon>
        <taxon>Streptophyta</taxon>
        <taxon>Embryophyta</taxon>
        <taxon>Tracheophyta</taxon>
        <taxon>Spermatophyta</taxon>
        <taxon>Magnoliopsida</taxon>
        <taxon>eudicotyledons</taxon>
        <taxon>Gunneridae</taxon>
        <taxon>Pentapetalae</taxon>
        <taxon>asterids</taxon>
        <taxon>Cornales</taxon>
        <taxon>Cornaceae</taxon>
        <taxon>Cornus</taxon>
    </lineage>
</organism>
<sequence>MEALVYTFLLVSTLGIIFFAIFFREPPKVPTKKMK</sequence>
<name>PSBT_CORMA</name>
<accession>Q6EYJ9</accession>
<proteinExistence type="inferred from homology"/>
<protein>
    <recommendedName>
        <fullName evidence="1">Photosystem II reaction center protein T</fullName>
        <shortName evidence="1">PSII-T</shortName>
    </recommendedName>
</protein>
<dbReference type="EMBL" id="AF528897">
    <property type="protein sequence ID" value="AAQ09374.1"/>
    <property type="molecule type" value="Genomic_DNA"/>
</dbReference>
<dbReference type="SMR" id="Q6EYJ9"/>
<dbReference type="GO" id="GO:0009535">
    <property type="term" value="C:chloroplast thylakoid membrane"/>
    <property type="evidence" value="ECO:0007669"/>
    <property type="project" value="UniProtKB-SubCell"/>
</dbReference>
<dbReference type="GO" id="GO:0009539">
    <property type="term" value="C:photosystem II reaction center"/>
    <property type="evidence" value="ECO:0007669"/>
    <property type="project" value="InterPro"/>
</dbReference>
<dbReference type="GO" id="GO:0015979">
    <property type="term" value="P:photosynthesis"/>
    <property type="evidence" value="ECO:0007669"/>
    <property type="project" value="UniProtKB-UniRule"/>
</dbReference>
<dbReference type="HAMAP" id="MF_00808">
    <property type="entry name" value="PSII_PsbT"/>
    <property type="match status" value="1"/>
</dbReference>
<dbReference type="InterPro" id="IPR001743">
    <property type="entry name" value="PSII_PsbT"/>
</dbReference>
<dbReference type="InterPro" id="IPR037268">
    <property type="entry name" value="PSII_PsbT_sf"/>
</dbReference>
<dbReference type="PANTHER" id="PTHR36411">
    <property type="match status" value="1"/>
</dbReference>
<dbReference type="PANTHER" id="PTHR36411:SF2">
    <property type="entry name" value="PHOTOSYSTEM II REACTION CENTER PROTEIN T"/>
    <property type="match status" value="1"/>
</dbReference>
<dbReference type="Pfam" id="PF01405">
    <property type="entry name" value="PsbT"/>
    <property type="match status" value="1"/>
</dbReference>
<dbReference type="SUPFAM" id="SSF161029">
    <property type="entry name" value="Photosystem II reaction center protein T, PsbT"/>
    <property type="match status" value="1"/>
</dbReference>
<evidence type="ECO:0000255" key="1">
    <source>
        <dbReference type="HAMAP-Rule" id="MF_00808"/>
    </source>
</evidence>
<comment type="function">
    <text evidence="1">Found at the monomer-monomer interface of the photosystem II (PS II) dimer, plays a role in assembly and dimerization of PSII. PSII is a light-driven water plastoquinone oxidoreductase, using light energy to abstract electrons from H(2)O, generating a proton gradient subsequently used for ATP formation.</text>
</comment>
<comment type="subunit">
    <text evidence="1">PSII is composed of 1 copy each of membrane proteins PsbA, PsbB, PsbC, PsbD, PsbE, PsbF, PsbH, PsbI, PsbJ, PsbK, PsbL, PsbM, PsbT, PsbY, PsbZ, Psb30/Ycf12, at least 3 peripheral proteins of the oxygen-evolving complex and a large number of cofactors. It forms dimeric complexes.</text>
</comment>
<comment type="subcellular location">
    <subcellularLocation>
        <location evidence="1">Plastid</location>
        <location evidence="1">Chloroplast thylakoid membrane</location>
        <topology evidence="1">Single-pass membrane protein</topology>
    </subcellularLocation>
</comment>
<comment type="similarity">
    <text evidence="1">Belongs to the PsbT family.</text>
</comment>
<reference key="1">
    <citation type="submission" date="2002-07" db="EMBL/GenBank/DDBJ databases">
        <title>Parsing out signal and noise for seed-plant phylogenetic inference.</title>
        <authorList>
            <person name="Graham S.W."/>
            <person name="Rai H.S."/>
            <person name="Ikegami K."/>
            <person name="Reeves P.A."/>
            <person name="Olmstead R.G."/>
        </authorList>
    </citation>
    <scope>NUCLEOTIDE SEQUENCE [GENOMIC DNA]</scope>
</reference>